<proteinExistence type="inferred from homology"/>
<comment type="function">
    <text evidence="1">Catalyzes the formation of 6,7-dimethyl-8-ribityllumazine by condensation of 5-amino-6-(D-ribitylamino)uracil with 3,4-dihydroxy-2-butanone 4-phosphate. This is the penultimate step in the biosynthesis of riboflavin.</text>
</comment>
<comment type="catalytic activity">
    <reaction evidence="1">
        <text>(2S)-2-hydroxy-3-oxobutyl phosphate + 5-amino-6-(D-ribitylamino)uracil = 6,7-dimethyl-8-(1-D-ribityl)lumazine + phosphate + 2 H2O + H(+)</text>
        <dbReference type="Rhea" id="RHEA:26152"/>
        <dbReference type="ChEBI" id="CHEBI:15377"/>
        <dbReference type="ChEBI" id="CHEBI:15378"/>
        <dbReference type="ChEBI" id="CHEBI:15934"/>
        <dbReference type="ChEBI" id="CHEBI:43474"/>
        <dbReference type="ChEBI" id="CHEBI:58201"/>
        <dbReference type="ChEBI" id="CHEBI:58830"/>
        <dbReference type="EC" id="2.5.1.78"/>
    </reaction>
</comment>
<comment type="pathway">
    <text evidence="1">Cofactor biosynthesis; riboflavin biosynthesis; riboflavin from 2-hydroxy-3-oxobutyl phosphate and 5-amino-6-(D-ribitylamino)uracil: step 1/2.</text>
</comment>
<comment type="subunit">
    <text evidence="1">Forms an icosahedral capsid composed of 60 subunits, arranged as a dodecamer of pentamers.</text>
</comment>
<comment type="similarity">
    <text evidence="1">Belongs to the DMRL synthase family.</text>
</comment>
<sequence>MNVVQGNIEAKNAKVAIVISRFNSFLVESLLDGAIDTLKRFGQVSDDNITVVRVPGAVELPLAAKRVAASGKFDGIIALGAVIRGGTPHFEFVAGECNKGLAQVALEYDLPVSFGVLTTDTIEQAIERSGTKAGNKGGEAALSLLEMVNVLQQLEQQL</sequence>
<name>RISB_SHEFN</name>
<protein>
    <recommendedName>
        <fullName evidence="1">6,7-dimethyl-8-ribityllumazine synthase</fullName>
        <shortName evidence="1">DMRL synthase</shortName>
        <shortName evidence="1">LS</shortName>
        <shortName evidence="1">Lumazine synthase</shortName>
        <ecNumber evidence="1">2.5.1.78</ecNumber>
    </recommendedName>
</protein>
<dbReference type="EC" id="2.5.1.78" evidence="1"/>
<dbReference type="EMBL" id="CP000447">
    <property type="protein sequence ID" value="ABI70891.1"/>
    <property type="molecule type" value="Genomic_DNA"/>
</dbReference>
<dbReference type="SMR" id="Q086C4"/>
<dbReference type="STRING" id="318167.Sfri_1038"/>
<dbReference type="KEGG" id="sfr:Sfri_1038"/>
<dbReference type="eggNOG" id="COG0054">
    <property type="taxonomic scope" value="Bacteria"/>
</dbReference>
<dbReference type="HOGENOM" id="CLU_089358_1_1_6"/>
<dbReference type="OrthoDB" id="9809709at2"/>
<dbReference type="UniPathway" id="UPA00275">
    <property type="reaction ID" value="UER00404"/>
</dbReference>
<dbReference type="Proteomes" id="UP000000684">
    <property type="component" value="Chromosome"/>
</dbReference>
<dbReference type="GO" id="GO:0005829">
    <property type="term" value="C:cytosol"/>
    <property type="evidence" value="ECO:0007669"/>
    <property type="project" value="TreeGrafter"/>
</dbReference>
<dbReference type="GO" id="GO:0009349">
    <property type="term" value="C:riboflavin synthase complex"/>
    <property type="evidence" value="ECO:0007669"/>
    <property type="project" value="InterPro"/>
</dbReference>
<dbReference type="GO" id="GO:0000906">
    <property type="term" value="F:6,7-dimethyl-8-ribityllumazine synthase activity"/>
    <property type="evidence" value="ECO:0007669"/>
    <property type="project" value="UniProtKB-UniRule"/>
</dbReference>
<dbReference type="GO" id="GO:0009231">
    <property type="term" value="P:riboflavin biosynthetic process"/>
    <property type="evidence" value="ECO:0007669"/>
    <property type="project" value="UniProtKB-UniRule"/>
</dbReference>
<dbReference type="CDD" id="cd09209">
    <property type="entry name" value="Lumazine_synthase-I"/>
    <property type="match status" value="1"/>
</dbReference>
<dbReference type="FunFam" id="3.40.50.960:FF:000001">
    <property type="entry name" value="6,7-dimethyl-8-ribityllumazine synthase"/>
    <property type="match status" value="1"/>
</dbReference>
<dbReference type="Gene3D" id="3.40.50.960">
    <property type="entry name" value="Lumazine/riboflavin synthase"/>
    <property type="match status" value="1"/>
</dbReference>
<dbReference type="HAMAP" id="MF_00178">
    <property type="entry name" value="Lumazine_synth"/>
    <property type="match status" value="1"/>
</dbReference>
<dbReference type="InterPro" id="IPR034964">
    <property type="entry name" value="LS"/>
</dbReference>
<dbReference type="InterPro" id="IPR002180">
    <property type="entry name" value="LS/RS"/>
</dbReference>
<dbReference type="InterPro" id="IPR036467">
    <property type="entry name" value="LS/RS_sf"/>
</dbReference>
<dbReference type="NCBIfam" id="TIGR00114">
    <property type="entry name" value="lumazine-synth"/>
    <property type="match status" value="1"/>
</dbReference>
<dbReference type="NCBIfam" id="NF000812">
    <property type="entry name" value="PRK00061.1-4"/>
    <property type="match status" value="1"/>
</dbReference>
<dbReference type="PANTHER" id="PTHR21058:SF0">
    <property type="entry name" value="6,7-DIMETHYL-8-RIBITYLLUMAZINE SYNTHASE"/>
    <property type="match status" value="1"/>
</dbReference>
<dbReference type="PANTHER" id="PTHR21058">
    <property type="entry name" value="6,7-DIMETHYL-8-RIBITYLLUMAZINE SYNTHASE DMRL SYNTHASE LUMAZINE SYNTHASE"/>
    <property type="match status" value="1"/>
</dbReference>
<dbReference type="Pfam" id="PF00885">
    <property type="entry name" value="DMRL_synthase"/>
    <property type="match status" value="1"/>
</dbReference>
<dbReference type="SUPFAM" id="SSF52121">
    <property type="entry name" value="Lumazine synthase"/>
    <property type="match status" value="1"/>
</dbReference>
<organism>
    <name type="scientific">Shewanella frigidimarina (strain NCIMB 400)</name>
    <dbReference type="NCBI Taxonomy" id="318167"/>
    <lineage>
        <taxon>Bacteria</taxon>
        <taxon>Pseudomonadati</taxon>
        <taxon>Pseudomonadota</taxon>
        <taxon>Gammaproteobacteria</taxon>
        <taxon>Alteromonadales</taxon>
        <taxon>Shewanellaceae</taxon>
        <taxon>Shewanella</taxon>
    </lineage>
</organism>
<feature type="chain" id="PRO_1000040510" description="6,7-dimethyl-8-ribityllumazine synthase">
    <location>
        <begin position="1"/>
        <end position="158"/>
    </location>
</feature>
<feature type="active site" description="Proton donor" evidence="1">
    <location>
        <position position="89"/>
    </location>
</feature>
<feature type="binding site" evidence="1">
    <location>
        <position position="22"/>
    </location>
    <ligand>
        <name>5-amino-6-(D-ribitylamino)uracil</name>
        <dbReference type="ChEBI" id="CHEBI:15934"/>
    </ligand>
</feature>
<feature type="binding site" evidence="1">
    <location>
        <begin position="57"/>
        <end position="59"/>
    </location>
    <ligand>
        <name>5-amino-6-(D-ribitylamino)uracil</name>
        <dbReference type="ChEBI" id="CHEBI:15934"/>
    </ligand>
</feature>
<feature type="binding site" evidence="1">
    <location>
        <begin position="81"/>
        <end position="83"/>
    </location>
    <ligand>
        <name>5-amino-6-(D-ribitylamino)uracil</name>
        <dbReference type="ChEBI" id="CHEBI:15934"/>
    </ligand>
</feature>
<feature type="binding site" evidence="1">
    <location>
        <begin position="86"/>
        <end position="87"/>
    </location>
    <ligand>
        <name>(2S)-2-hydroxy-3-oxobutyl phosphate</name>
        <dbReference type="ChEBI" id="CHEBI:58830"/>
    </ligand>
</feature>
<feature type="binding site" evidence="1">
    <location>
        <position position="114"/>
    </location>
    <ligand>
        <name>5-amino-6-(D-ribitylamino)uracil</name>
        <dbReference type="ChEBI" id="CHEBI:15934"/>
    </ligand>
</feature>
<feature type="binding site" evidence="1">
    <location>
        <position position="128"/>
    </location>
    <ligand>
        <name>(2S)-2-hydroxy-3-oxobutyl phosphate</name>
        <dbReference type="ChEBI" id="CHEBI:58830"/>
    </ligand>
</feature>
<evidence type="ECO:0000255" key="1">
    <source>
        <dbReference type="HAMAP-Rule" id="MF_00178"/>
    </source>
</evidence>
<gene>
    <name evidence="1" type="primary">ribH</name>
    <name type="ordered locus">Sfri_1038</name>
</gene>
<keyword id="KW-1185">Reference proteome</keyword>
<keyword id="KW-0686">Riboflavin biosynthesis</keyword>
<keyword id="KW-0808">Transferase</keyword>
<accession>Q086C4</accession>
<reference key="1">
    <citation type="submission" date="2006-08" db="EMBL/GenBank/DDBJ databases">
        <title>Complete sequence of Shewanella frigidimarina NCIMB 400.</title>
        <authorList>
            <consortium name="US DOE Joint Genome Institute"/>
            <person name="Copeland A."/>
            <person name="Lucas S."/>
            <person name="Lapidus A."/>
            <person name="Barry K."/>
            <person name="Detter J.C."/>
            <person name="Glavina del Rio T."/>
            <person name="Hammon N."/>
            <person name="Israni S."/>
            <person name="Dalin E."/>
            <person name="Tice H."/>
            <person name="Pitluck S."/>
            <person name="Fredrickson J.K."/>
            <person name="Kolker E."/>
            <person name="McCuel L.A."/>
            <person name="DiChristina T."/>
            <person name="Nealson K.H."/>
            <person name="Newman D."/>
            <person name="Tiedje J.M."/>
            <person name="Zhou J."/>
            <person name="Romine M.F."/>
            <person name="Culley D.E."/>
            <person name="Serres M."/>
            <person name="Chertkov O."/>
            <person name="Brettin T."/>
            <person name="Bruce D."/>
            <person name="Han C."/>
            <person name="Tapia R."/>
            <person name="Gilna P."/>
            <person name="Schmutz J."/>
            <person name="Larimer F."/>
            <person name="Land M."/>
            <person name="Hauser L."/>
            <person name="Kyrpides N."/>
            <person name="Mikhailova N."/>
            <person name="Richardson P."/>
        </authorList>
    </citation>
    <scope>NUCLEOTIDE SEQUENCE [LARGE SCALE GENOMIC DNA]</scope>
    <source>
        <strain>NCIMB 400</strain>
    </source>
</reference>